<evidence type="ECO:0000255" key="1">
    <source>
        <dbReference type="HAMAP-Rule" id="MF_00244"/>
    </source>
</evidence>
<organism>
    <name type="scientific">Clostridium botulinum (strain Loch Maree / Type A3)</name>
    <dbReference type="NCBI Taxonomy" id="498214"/>
    <lineage>
        <taxon>Bacteria</taxon>
        <taxon>Bacillati</taxon>
        <taxon>Bacillota</taxon>
        <taxon>Clostridia</taxon>
        <taxon>Eubacteriales</taxon>
        <taxon>Clostridiaceae</taxon>
        <taxon>Clostridium</taxon>
    </lineage>
</organism>
<name>NADD_CLOBM</name>
<proteinExistence type="inferred from homology"/>
<sequence>MINKAILGGTFDPIHNAHINVAYEALERFNLEEVIFIPAGNPPHKIKLKKTPAHIRYEMVKLAIEKETRFSISDFEIKSKDLSYTYRTLKHFKEKEPETNWYFITGEDCLSYLEHWKYIDEIFNICNFVIFSREGFKGKEEIIKKKKSMLLKYGKEILFMDASILDISSTKIRNRIKEGKEVSFYMPDKVYKFILQNNLYK</sequence>
<reference key="1">
    <citation type="journal article" date="2007" name="PLoS ONE">
        <title>Analysis of the neurotoxin complex genes in Clostridium botulinum A1-A4 and B1 strains: BoNT/A3, /Ba4 and /B1 clusters are located within plasmids.</title>
        <authorList>
            <person name="Smith T.J."/>
            <person name="Hill K.K."/>
            <person name="Foley B.T."/>
            <person name="Detter J.C."/>
            <person name="Munk A.C."/>
            <person name="Bruce D.C."/>
            <person name="Doggett N.A."/>
            <person name="Smith L.A."/>
            <person name="Marks J.D."/>
            <person name="Xie G."/>
            <person name="Brettin T.S."/>
        </authorList>
    </citation>
    <scope>NUCLEOTIDE SEQUENCE [LARGE SCALE GENOMIC DNA]</scope>
    <source>
        <strain>Loch Maree / Type A3</strain>
    </source>
</reference>
<keyword id="KW-0067">ATP-binding</keyword>
<keyword id="KW-0520">NAD</keyword>
<keyword id="KW-0547">Nucleotide-binding</keyword>
<keyword id="KW-0548">Nucleotidyltransferase</keyword>
<keyword id="KW-0662">Pyridine nucleotide biosynthesis</keyword>
<keyword id="KW-0808">Transferase</keyword>
<feature type="chain" id="PRO_1000100772" description="Probable nicotinate-nucleotide adenylyltransferase">
    <location>
        <begin position="1"/>
        <end position="201"/>
    </location>
</feature>
<comment type="function">
    <text evidence="1">Catalyzes the reversible adenylation of nicotinate mononucleotide (NaMN) to nicotinic acid adenine dinucleotide (NaAD).</text>
</comment>
<comment type="catalytic activity">
    <reaction evidence="1">
        <text>nicotinate beta-D-ribonucleotide + ATP + H(+) = deamido-NAD(+) + diphosphate</text>
        <dbReference type="Rhea" id="RHEA:22860"/>
        <dbReference type="ChEBI" id="CHEBI:15378"/>
        <dbReference type="ChEBI" id="CHEBI:30616"/>
        <dbReference type="ChEBI" id="CHEBI:33019"/>
        <dbReference type="ChEBI" id="CHEBI:57502"/>
        <dbReference type="ChEBI" id="CHEBI:58437"/>
        <dbReference type="EC" id="2.7.7.18"/>
    </reaction>
</comment>
<comment type="pathway">
    <text evidence="1">Cofactor biosynthesis; NAD(+) biosynthesis; deamido-NAD(+) from nicotinate D-ribonucleotide: step 1/1.</text>
</comment>
<comment type="similarity">
    <text evidence="1">Belongs to the NadD family.</text>
</comment>
<accession>B1KZR1</accession>
<gene>
    <name evidence="1" type="primary">nadD</name>
    <name type="ordered locus">CLK_2368</name>
</gene>
<protein>
    <recommendedName>
        <fullName evidence="1">Probable nicotinate-nucleotide adenylyltransferase</fullName>
        <ecNumber evidence="1">2.7.7.18</ecNumber>
    </recommendedName>
    <alternativeName>
        <fullName evidence="1">Deamido-NAD(+) diphosphorylase</fullName>
    </alternativeName>
    <alternativeName>
        <fullName evidence="1">Deamido-NAD(+) pyrophosphorylase</fullName>
    </alternativeName>
    <alternativeName>
        <fullName evidence="1">Nicotinate mononucleotide adenylyltransferase</fullName>
        <shortName evidence="1">NaMN adenylyltransferase</shortName>
    </alternativeName>
</protein>
<dbReference type="EC" id="2.7.7.18" evidence="1"/>
<dbReference type="EMBL" id="CP000962">
    <property type="protein sequence ID" value="ACA55082.1"/>
    <property type="molecule type" value="Genomic_DNA"/>
</dbReference>
<dbReference type="RefSeq" id="WP_012343106.1">
    <property type="nucleotide sequence ID" value="NC_010520.1"/>
</dbReference>
<dbReference type="SMR" id="B1KZR1"/>
<dbReference type="KEGG" id="cbl:CLK_2368"/>
<dbReference type="HOGENOM" id="CLU_069765_3_2_9"/>
<dbReference type="UniPathway" id="UPA00253">
    <property type="reaction ID" value="UER00332"/>
</dbReference>
<dbReference type="GO" id="GO:0005524">
    <property type="term" value="F:ATP binding"/>
    <property type="evidence" value="ECO:0007669"/>
    <property type="project" value="UniProtKB-KW"/>
</dbReference>
<dbReference type="GO" id="GO:0004515">
    <property type="term" value="F:nicotinate-nucleotide adenylyltransferase activity"/>
    <property type="evidence" value="ECO:0007669"/>
    <property type="project" value="UniProtKB-UniRule"/>
</dbReference>
<dbReference type="GO" id="GO:0009435">
    <property type="term" value="P:NAD biosynthetic process"/>
    <property type="evidence" value="ECO:0007669"/>
    <property type="project" value="UniProtKB-UniRule"/>
</dbReference>
<dbReference type="CDD" id="cd02165">
    <property type="entry name" value="NMNAT"/>
    <property type="match status" value="1"/>
</dbReference>
<dbReference type="Gene3D" id="3.40.50.620">
    <property type="entry name" value="HUPs"/>
    <property type="match status" value="1"/>
</dbReference>
<dbReference type="HAMAP" id="MF_00244">
    <property type="entry name" value="NaMN_adenylyltr"/>
    <property type="match status" value="1"/>
</dbReference>
<dbReference type="InterPro" id="IPR004821">
    <property type="entry name" value="Cyt_trans-like"/>
</dbReference>
<dbReference type="InterPro" id="IPR005248">
    <property type="entry name" value="NadD/NMNAT"/>
</dbReference>
<dbReference type="InterPro" id="IPR014729">
    <property type="entry name" value="Rossmann-like_a/b/a_fold"/>
</dbReference>
<dbReference type="NCBIfam" id="TIGR00125">
    <property type="entry name" value="cyt_tran_rel"/>
    <property type="match status" value="1"/>
</dbReference>
<dbReference type="NCBIfam" id="TIGR00482">
    <property type="entry name" value="nicotinate (nicotinamide) nucleotide adenylyltransferase"/>
    <property type="match status" value="1"/>
</dbReference>
<dbReference type="NCBIfam" id="NF000840">
    <property type="entry name" value="PRK00071.1-3"/>
    <property type="match status" value="1"/>
</dbReference>
<dbReference type="PANTHER" id="PTHR39321">
    <property type="entry name" value="NICOTINATE-NUCLEOTIDE ADENYLYLTRANSFERASE-RELATED"/>
    <property type="match status" value="1"/>
</dbReference>
<dbReference type="PANTHER" id="PTHR39321:SF3">
    <property type="entry name" value="PHOSPHOPANTETHEINE ADENYLYLTRANSFERASE"/>
    <property type="match status" value="1"/>
</dbReference>
<dbReference type="Pfam" id="PF01467">
    <property type="entry name" value="CTP_transf_like"/>
    <property type="match status" value="1"/>
</dbReference>
<dbReference type="SUPFAM" id="SSF52374">
    <property type="entry name" value="Nucleotidylyl transferase"/>
    <property type="match status" value="1"/>
</dbReference>